<reference key="1">
    <citation type="submission" date="2001-06" db="EMBL/GenBank/DDBJ databases">
        <title>Glu-tRNAGln amidotransferase of Bacillus stearothermophilus.</title>
        <authorList>
            <person name="Kwak J.H."/>
            <person name="Shin K."/>
            <person name="Kim S.I."/>
        </authorList>
    </citation>
    <scope>NUCLEOTIDE SEQUENCE [GENOMIC DNA]</scope>
</reference>
<dbReference type="EC" id="6.3.5.-" evidence="1"/>
<dbReference type="EMBL" id="AY040860">
    <property type="protein sequence ID" value="AAK72611.1"/>
    <property type="molecule type" value="Genomic_DNA"/>
</dbReference>
<dbReference type="SMR" id="P58250"/>
<dbReference type="GO" id="GO:0050566">
    <property type="term" value="F:asparaginyl-tRNA synthase (glutamine-hydrolyzing) activity"/>
    <property type="evidence" value="ECO:0007669"/>
    <property type="project" value="RHEA"/>
</dbReference>
<dbReference type="GO" id="GO:0005524">
    <property type="term" value="F:ATP binding"/>
    <property type="evidence" value="ECO:0007669"/>
    <property type="project" value="UniProtKB-KW"/>
</dbReference>
<dbReference type="GO" id="GO:0050567">
    <property type="term" value="F:glutaminyl-tRNA synthase (glutamine-hydrolyzing) activity"/>
    <property type="evidence" value="ECO:0007669"/>
    <property type="project" value="UniProtKB-UniRule"/>
</dbReference>
<dbReference type="GO" id="GO:0070681">
    <property type="term" value="P:glutaminyl-tRNAGln biosynthesis via transamidation"/>
    <property type="evidence" value="ECO:0007669"/>
    <property type="project" value="TreeGrafter"/>
</dbReference>
<dbReference type="GO" id="GO:0006450">
    <property type="term" value="P:regulation of translational fidelity"/>
    <property type="evidence" value="ECO:0007669"/>
    <property type="project" value="InterPro"/>
</dbReference>
<dbReference type="GO" id="GO:0006412">
    <property type="term" value="P:translation"/>
    <property type="evidence" value="ECO:0007669"/>
    <property type="project" value="UniProtKB-UniRule"/>
</dbReference>
<dbReference type="Gene3D" id="1.10.20.60">
    <property type="entry name" value="Glu-tRNAGln amidotransferase C subunit, N-terminal domain"/>
    <property type="match status" value="1"/>
</dbReference>
<dbReference type="HAMAP" id="MF_00122">
    <property type="entry name" value="GatC"/>
    <property type="match status" value="1"/>
</dbReference>
<dbReference type="InterPro" id="IPR036113">
    <property type="entry name" value="Asp/Glu-ADT_sf_sub_c"/>
</dbReference>
<dbReference type="InterPro" id="IPR003837">
    <property type="entry name" value="GatC"/>
</dbReference>
<dbReference type="NCBIfam" id="TIGR00135">
    <property type="entry name" value="gatC"/>
    <property type="match status" value="1"/>
</dbReference>
<dbReference type="PANTHER" id="PTHR15004">
    <property type="entry name" value="GLUTAMYL-TRNA(GLN) AMIDOTRANSFERASE SUBUNIT C, MITOCHONDRIAL"/>
    <property type="match status" value="1"/>
</dbReference>
<dbReference type="PANTHER" id="PTHR15004:SF0">
    <property type="entry name" value="GLUTAMYL-TRNA(GLN) AMIDOTRANSFERASE SUBUNIT C, MITOCHONDRIAL"/>
    <property type="match status" value="1"/>
</dbReference>
<dbReference type="Pfam" id="PF02686">
    <property type="entry name" value="GatC"/>
    <property type="match status" value="1"/>
</dbReference>
<dbReference type="SUPFAM" id="SSF141000">
    <property type="entry name" value="Glu-tRNAGln amidotransferase C subunit"/>
    <property type="match status" value="1"/>
</dbReference>
<comment type="function">
    <text evidence="1">Allows the formation of correctly charged Asn-tRNA(Asn) or Gln-tRNA(Gln) through the transamidation of misacylated Asp-tRNA(Asn) or Glu-tRNA(Gln) in organisms which lack either or both of asparaginyl-tRNA or glutaminyl-tRNA synthetases. The reaction takes place in the presence of glutamine and ATP through an activated phospho-Asp-tRNA(Asn) or phospho-Glu-tRNA(Gln).</text>
</comment>
<comment type="catalytic activity">
    <reaction evidence="1">
        <text>L-glutamyl-tRNA(Gln) + L-glutamine + ATP + H2O = L-glutaminyl-tRNA(Gln) + L-glutamate + ADP + phosphate + H(+)</text>
        <dbReference type="Rhea" id="RHEA:17521"/>
        <dbReference type="Rhea" id="RHEA-COMP:9681"/>
        <dbReference type="Rhea" id="RHEA-COMP:9684"/>
        <dbReference type="ChEBI" id="CHEBI:15377"/>
        <dbReference type="ChEBI" id="CHEBI:15378"/>
        <dbReference type="ChEBI" id="CHEBI:29985"/>
        <dbReference type="ChEBI" id="CHEBI:30616"/>
        <dbReference type="ChEBI" id="CHEBI:43474"/>
        <dbReference type="ChEBI" id="CHEBI:58359"/>
        <dbReference type="ChEBI" id="CHEBI:78520"/>
        <dbReference type="ChEBI" id="CHEBI:78521"/>
        <dbReference type="ChEBI" id="CHEBI:456216"/>
    </reaction>
</comment>
<comment type="catalytic activity">
    <reaction evidence="1">
        <text>L-aspartyl-tRNA(Asn) + L-glutamine + ATP + H2O = L-asparaginyl-tRNA(Asn) + L-glutamate + ADP + phosphate + 2 H(+)</text>
        <dbReference type="Rhea" id="RHEA:14513"/>
        <dbReference type="Rhea" id="RHEA-COMP:9674"/>
        <dbReference type="Rhea" id="RHEA-COMP:9677"/>
        <dbReference type="ChEBI" id="CHEBI:15377"/>
        <dbReference type="ChEBI" id="CHEBI:15378"/>
        <dbReference type="ChEBI" id="CHEBI:29985"/>
        <dbReference type="ChEBI" id="CHEBI:30616"/>
        <dbReference type="ChEBI" id="CHEBI:43474"/>
        <dbReference type="ChEBI" id="CHEBI:58359"/>
        <dbReference type="ChEBI" id="CHEBI:78515"/>
        <dbReference type="ChEBI" id="CHEBI:78516"/>
        <dbReference type="ChEBI" id="CHEBI:456216"/>
    </reaction>
</comment>
<comment type="subunit">
    <text evidence="1">Heterotrimer of A, B and C subunits.</text>
</comment>
<comment type="similarity">
    <text evidence="1">Belongs to the GatC family.</text>
</comment>
<name>GATC_GEOSE</name>
<protein>
    <recommendedName>
        <fullName>Glutamyl-tRNA(Gln) amidotransferase subunit C</fullName>
        <shortName>Glu-ADT subunit C</shortName>
        <ecNumber evidence="1">6.3.5.-</ecNumber>
    </recommendedName>
</protein>
<feature type="chain" id="PRO_0000105275" description="Glutamyl-tRNA(Gln) amidotransferase subunit C">
    <location>
        <begin position="1"/>
        <end position="96"/>
    </location>
</feature>
<accession>P58250</accession>
<keyword id="KW-0067">ATP-binding</keyword>
<keyword id="KW-0436">Ligase</keyword>
<keyword id="KW-0547">Nucleotide-binding</keyword>
<keyword id="KW-0648">Protein biosynthesis</keyword>
<gene>
    <name evidence="1" type="primary">gatC</name>
</gene>
<organism>
    <name type="scientific">Geobacillus stearothermophilus</name>
    <name type="common">Bacillus stearothermophilus</name>
    <dbReference type="NCBI Taxonomy" id="1422"/>
    <lineage>
        <taxon>Bacteria</taxon>
        <taxon>Bacillati</taxon>
        <taxon>Bacillota</taxon>
        <taxon>Bacilli</taxon>
        <taxon>Bacillales</taxon>
        <taxon>Anoxybacillaceae</taxon>
        <taxon>Geobacillus</taxon>
    </lineage>
</organism>
<evidence type="ECO:0000255" key="1">
    <source>
        <dbReference type="HAMAP-Rule" id="MF_00122"/>
    </source>
</evidence>
<proteinExistence type="inferred from homology"/>
<sequence>MSRISIEQVKHVADLARLAITDEEAEMFTKQLDAIITFAEQLNELDTENVPPTSHVLDMRNVMREDIPEPGLPREEVLKNAPDQQDGQFRVPAILE</sequence>